<organism>
    <name type="scientific">Sulfurovum sp. (strain NBC37-1)</name>
    <dbReference type="NCBI Taxonomy" id="387093"/>
    <lineage>
        <taxon>Bacteria</taxon>
        <taxon>Pseudomonadati</taxon>
        <taxon>Campylobacterota</taxon>
        <taxon>Epsilonproteobacteria</taxon>
        <taxon>Campylobacterales</taxon>
        <taxon>Sulfurovaceae</taxon>
        <taxon>Sulfurovum</taxon>
    </lineage>
</organism>
<keyword id="KW-0066">ATP synthesis</keyword>
<keyword id="KW-0997">Cell inner membrane</keyword>
<keyword id="KW-1003">Cell membrane</keyword>
<keyword id="KW-0139">CF(1)</keyword>
<keyword id="KW-0375">Hydrogen ion transport</keyword>
<keyword id="KW-0406">Ion transport</keyword>
<keyword id="KW-0472">Membrane</keyword>
<keyword id="KW-0813">Transport</keyword>
<evidence type="ECO:0000255" key="1">
    <source>
        <dbReference type="HAMAP-Rule" id="MF_01416"/>
    </source>
</evidence>
<reference key="1">
    <citation type="journal article" date="2007" name="Proc. Natl. Acad. Sci. U.S.A.">
        <title>Deep-sea vent epsilon-proteobacterial genomes provide insights into emergence of pathogens.</title>
        <authorList>
            <person name="Nakagawa S."/>
            <person name="Takaki Y."/>
            <person name="Shimamura S."/>
            <person name="Reysenbach A.-L."/>
            <person name="Takai K."/>
            <person name="Horikoshi K."/>
        </authorList>
    </citation>
    <scope>NUCLEOTIDE SEQUENCE [LARGE SCALE GENOMIC DNA]</scope>
    <source>
        <strain>NBC37-1</strain>
    </source>
</reference>
<feature type="chain" id="PRO_0000382155" description="ATP synthase subunit delta">
    <location>
        <begin position="1"/>
        <end position="175"/>
    </location>
</feature>
<name>ATPD_SULNB</name>
<comment type="function">
    <text evidence="1">F(1)F(0) ATP synthase produces ATP from ADP in the presence of a proton or sodium gradient. F-type ATPases consist of two structural domains, F(1) containing the extramembraneous catalytic core and F(0) containing the membrane proton channel, linked together by a central stalk and a peripheral stalk. During catalysis, ATP synthesis in the catalytic domain of F(1) is coupled via a rotary mechanism of the central stalk subunits to proton translocation.</text>
</comment>
<comment type="function">
    <text evidence="1">This protein is part of the stalk that links CF(0) to CF(1). It either transmits conformational changes from CF(0) to CF(1) or is implicated in proton conduction.</text>
</comment>
<comment type="subunit">
    <text evidence="1">F-type ATPases have 2 components, F(1) - the catalytic core - and F(0) - the membrane proton channel. F(1) has five subunits: alpha(3), beta(3), gamma(1), delta(1), epsilon(1). F(0) has three main subunits: a(1), b(2) and c(10-14). The alpha and beta chains form an alternating ring which encloses part of the gamma chain. F(1) is attached to F(0) by a central stalk formed by the gamma and epsilon chains, while a peripheral stalk is formed by the delta and b chains.</text>
</comment>
<comment type="subcellular location">
    <subcellularLocation>
        <location evidence="1">Cell inner membrane</location>
        <topology evidence="1">Peripheral membrane protein</topology>
    </subcellularLocation>
</comment>
<comment type="similarity">
    <text evidence="1">Belongs to the ATPase delta chain family.</text>
</comment>
<proteinExistence type="inferred from homology"/>
<gene>
    <name evidence="1" type="primary">atpH</name>
    <name type="ordered locus">SUN_1774</name>
</gene>
<dbReference type="EMBL" id="AP009179">
    <property type="protein sequence ID" value="BAF72721.1"/>
    <property type="molecule type" value="Genomic_DNA"/>
</dbReference>
<dbReference type="RefSeq" id="WP_012083531.1">
    <property type="nucleotide sequence ID" value="NC_009663.1"/>
</dbReference>
<dbReference type="SMR" id="A6QB62"/>
<dbReference type="STRING" id="387093.SUN_1774"/>
<dbReference type="KEGG" id="sun:SUN_1774"/>
<dbReference type="eggNOG" id="COG0712">
    <property type="taxonomic scope" value="Bacteria"/>
</dbReference>
<dbReference type="HOGENOM" id="CLU_085114_3_1_7"/>
<dbReference type="OrthoDB" id="5339308at2"/>
<dbReference type="Proteomes" id="UP000006378">
    <property type="component" value="Chromosome"/>
</dbReference>
<dbReference type="GO" id="GO:0005886">
    <property type="term" value="C:plasma membrane"/>
    <property type="evidence" value="ECO:0007669"/>
    <property type="project" value="UniProtKB-SubCell"/>
</dbReference>
<dbReference type="GO" id="GO:0045259">
    <property type="term" value="C:proton-transporting ATP synthase complex"/>
    <property type="evidence" value="ECO:0007669"/>
    <property type="project" value="UniProtKB-KW"/>
</dbReference>
<dbReference type="GO" id="GO:0046933">
    <property type="term" value="F:proton-transporting ATP synthase activity, rotational mechanism"/>
    <property type="evidence" value="ECO:0007669"/>
    <property type="project" value="UniProtKB-UniRule"/>
</dbReference>
<dbReference type="Gene3D" id="1.10.520.20">
    <property type="entry name" value="N-terminal domain of the delta subunit of the F1F0-ATP synthase"/>
    <property type="match status" value="1"/>
</dbReference>
<dbReference type="HAMAP" id="MF_01416">
    <property type="entry name" value="ATP_synth_delta_bact"/>
    <property type="match status" value="1"/>
</dbReference>
<dbReference type="InterPro" id="IPR026015">
    <property type="entry name" value="ATP_synth_OSCP/delta_N_sf"/>
</dbReference>
<dbReference type="InterPro" id="IPR000711">
    <property type="entry name" value="ATPase_OSCP/dsu"/>
</dbReference>
<dbReference type="NCBIfam" id="TIGR01145">
    <property type="entry name" value="ATP_synt_delta"/>
    <property type="match status" value="1"/>
</dbReference>
<dbReference type="NCBIfam" id="NF006291">
    <property type="entry name" value="PRK08474.1"/>
    <property type="match status" value="1"/>
</dbReference>
<dbReference type="PANTHER" id="PTHR11910">
    <property type="entry name" value="ATP SYNTHASE DELTA CHAIN"/>
    <property type="match status" value="1"/>
</dbReference>
<dbReference type="Pfam" id="PF00213">
    <property type="entry name" value="OSCP"/>
    <property type="match status" value="1"/>
</dbReference>
<dbReference type="SUPFAM" id="SSF47928">
    <property type="entry name" value="N-terminal domain of the delta subunit of the F1F0-ATP synthase"/>
    <property type="match status" value="1"/>
</dbReference>
<sequence>MEELIAKRYATALSSVSKDVKSIASVLNVLSEAISVPEVHEALTSPIVSAEKKTDMILSAIGKEADATMVNFIKILGENKRLDLIPAIAKVLNADLQKESNQYEGVLKSSSELGKEELAKLEKTLETYTGSKIELKQEKTDLEGLRVSVDDLGIEVNFSKQRVKEQLIDFIKKSL</sequence>
<accession>A6QB62</accession>
<protein>
    <recommendedName>
        <fullName evidence="1">ATP synthase subunit delta</fullName>
    </recommendedName>
    <alternativeName>
        <fullName evidence="1">ATP synthase F(1) sector subunit delta</fullName>
    </alternativeName>
    <alternativeName>
        <fullName evidence="1">F-type ATPase subunit delta</fullName>
        <shortName evidence="1">F-ATPase subunit delta</shortName>
    </alternativeName>
</protein>